<keyword id="KW-0489">Methyltransferase</keyword>
<keyword id="KW-1185">Reference proteome</keyword>
<keyword id="KW-0949">S-adenosyl-L-methionine</keyword>
<keyword id="KW-0808">Transferase</keyword>
<keyword id="KW-0831">Ubiquinone biosynthesis</keyword>
<sequence>MASIDLASTPLTATQNVDPNEIKKFEDMASRWWDLEGEFKPLHQINPLRLNYVLEKANGLFGKRVLDVGCGGGILAESMAREGAQVTGLDMGKEPLEVARLHALETGTKLTYIQSTVEAHAEANPHTYDVVTCMEMLEHVPDPLSVIQSCAKLVKPGGHVFFSTLNRNVKSYLFAIVGAEKLLKIVPEGTHDHNKFIRPSELLKMVDHTALQEQGITGLHYNPFTDTYRLGSNVDVNYIVHTRLF</sequence>
<comment type="function">
    <text evidence="1">O-methyltransferase that catalyzes the 2 O-methylation steps in the ubiquinone biosynthetic pathway.</text>
</comment>
<comment type="catalytic activity">
    <reaction evidence="1">
        <text>a 3-demethylubiquinol + S-adenosyl-L-methionine = a ubiquinol + S-adenosyl-L-homocysteine + H(+)</text>
        <dbReference type="Rhea" id="RHEA:44380"/>
        <dbReference type="Rhea" id="RHEA-COMP:9566"/>
        <dbReference type="Rhea" id="RHEA-COMP:10914"/>
        <dbReference type="ChEBI" id="CHEBI:15378"/>
        <dbReference type="ChEBI" id="CHEBI:17976"/>
        <dbReference type="ChEBI" id="CHEBI:57856"/>
        <dbReference type="ChEBI" id="CHEBI:59789"/>
        <dbReference type="ChEBI" id="CHEBI:84422"/>
        <dbReference type="EC" id="2.1.1.64"/>
    </reaction>
</comment>
<comment type="catalytic activity">
    <reaction evidence="1">
        <text>a 3-(all-trans-polyprenyl)benzene-1,2-diol + S-adenosyl-L-methionine = a 2-methoxy-6-(all-trans-polyprenyl)phenol + S-adenosyl-L-homocysteine + H(+)</text>
        <dbReference type="Rhea" id="RHEA:31411"/>
        <dbReference type="Rhea" id="RHEA-COMP:9550"/>
        <dbReference type="Rhea" id="RHEA-COMP:9551"/>
        <dbReference type="ChEBI" id="CHEBI:15378"/>
        <dbReference type="ChEBI" id="CHEBI:57856"/>
        <dbReference type="ChEBI" id="CHEBI:59789"/>
        <dbReference type="ChEBI" id="CHEBI:62729"/>
        <dbReference type="ChEBI" id="CHEBI:62731"/>
        <dbReference type="EC" id="2.1.1.222"/>
    </reaction>
</comment>
<comment type="pathway">
    <text evidence="1">Cofactor biosynthesis; ubiquinone biosynthesis.</text>
</comment>
<comment type="similarity">
    <text evidence="1">Belongs to the methyltransferase superfamily. UbiG/COQ3 family.</text>
</comment>
<accession>Q9KSJ9</accession>
<evidence type="ECO:0000255" key="1">
    <source>
        <dbReference type="HAMAP-Rule" id="MF_00472"/>
    </source>
</evidence>
<reference key="1">
    <citation type="journal article" date="2000" name="Nature">
        <title>DNA sequence of both chromosomes of the cholera pathogen Vibrio cholerae.</title>
        <authorList>
            <person name="Heidelberg J.F."/>
            <person name="Eisen J.A."/>
            <person name="Nelson W.C."/>
            <person name="Clayton R.A."/>
            <person name="Gwinn M.L."/>
            <person name="Dodson R.J."/>
            <person name="Haft D.H."/>
            <person name="Hickey E.K."/>
            <person name="Peterson J.D."/>
            <person name="Umayam L.A."/>
            <person name="Gill S.R."/>
            <person name="Nelson K.E."/>
            <person name="Read T.D."/>
            <person name="Tettelin H."/>
            <person name="Richardson D.L."/>
            <person name="Ermolaeva M.D."/>
            <person name="Vamathevan J.J."/>
            <person name="Bass S."/>
            <person name="Qin H."/>
            <person name="Dragoi I."/>
            <person name="Sellers P."/>
            <person name="McDonald L.A."/>
            <person name="Utterback T.R."/>
            <person name="Fleischmann R.D."/>
            <person name="Nierman W.C."/>
            <person name="White O."/>
            <person name="Salzberg S.L."/>
            <person name="Smith H.O."/>
            <person name="Colwell R.R."/>
            <person name="Mekalanos J.J."/>
            <person name="Venter J.C."/>
            <person name="Fraser C.M."/>
        </authorList>
    </citation>
    <scope>NUCLEOTIDE SEQUENCE [LARGE SCALE GENOMIC DNA]</scope>
    <source>
        <strain>ATCC 39315 / El Tor Inaba N16961</strain>
    </source>
</reference>
<dbReference type="EC" id="2.1.1.222" evidence="1"/>
<dbReference type="EC" id="2.1.1.64" evidence="1"/>
<dbReference type="EMBL" id="AE003852">
    <property type="protein sequence ID" value="AAF94416.1"/>
    <property type="molecule type" value="Genomic_DNA"/>
</dbReference>
<dbReference type="PIR" id="D82221">
    <property type="entry name" value="D82221"/>
</dbReference>
<dbReference type="RefSeq" id="NP_230902.1">
    <property type="nucleotide sequence ID" value="NC_002505.1"/>
</dbReference>
<dbReference type="RefSeq" id="WP_000146463.1">
    <property type="nucleotide sequence ID" value="NZ_LT906614.1"/>
</dbReference>
<dbReference type="SMR" id="Q9KSJ9"/>
<dbReference type="STRING" id="243277.VC_1257"/>
<dbReference type="DNASU" id="2614694"/>
<dbReference type="EnsemblBacteria" id="AAF94416">
    <property type="protein sequence ID" value="AAF94416"/>
    <property type="gene ID" value="VC_1257"/>
</dbReference>
<dbReference type="GeneID" id="89514221"/>
<dbReference type="KEGG" id="vch:VC_1257"/>
<dbReference type="PATRIC" id="fig|243277.26.peg.1196"/>
<dbReference type="eggNOG" id="COG2227">
    <property type="taxonomic scope" value="Bacteria"/>
</dbReference>
<dbReference type="HOGENOM" id="CLU_042432_5_0_6"/>
<dbReference type="UniPathway" id="UPA00232"/>
<dbReference type="Proteomes" id="UP000000584">
    <property type="component" value="Chromosome 1"/>
</dbReference>
<dbReference type="GO" id="GO:0102208">
    <property type="term" value="F:2-polyprenyl-6-hydroxyphenol methylase activity"/>
    <property type="evidence" value="ECO:0007669"/>
    <property type="project" value="UniProtKB-EC"/>
</dbReference>
<dbReference type="GO" id="GO:0061542">
    <property type="term" value="F:3-demethylubiquinol 3-O-methyltransferase activity"/>
    <property type="evidence" value="ECO:0007669"/>
    <property type="project" value="UniProtKB-UniRule"/>
</dbReference>
<dbReference type="GO" id="GO:0008168">
    <property type="term" value="F:methyltransferase activity"/>
    <property type="evidence" value="ECO:0000318"/>
    <property type="project" value="GO_Central"/>
</dbReference>
<dbReference type="GO" id="GO:0010420">
    <property type="term" value="F:polyprenyldihydroxybenzoate methyltransferase activity"/>
    <property type="evidence" value="ECO:0007669"/>
    <property type="project" value="InterPro"/>
</dbReference>
<dbReference type="GO" id="GO:0032259">
    <property type="term" value="P:methylation"/>
    <property type="evidence" value="ECO:0007669"/>
    <property type="project" value="UniProtKB-KW"/>
</dbReference>
<dbReference type="CDD" id="cd02440">
    <property type="entry name" value="AdoMet_MTases"/>
    <property type="match status" value="1"/>
</dbReference>
<dbReference type="FunFam" id="3.40.50.150:FF:000028">
    <property type="entry name" value="Ubiquinone biosynthesis O-methyltransferase"/>
    <property type="match status" value="1"/>
</dbReference>
<dbReference type="Gene3D" id="3.40.50.150">
    <property type="entry name" value="Vaccinia Virus protein VP39"/>
    <property type="match status" value="1"/>
</dbReference>
<dbReference type="HAMAP" id="MF_00472">
    <property type="entry name" value="UbiG"/>
    <property type="match status" value="1"/>
</dbReference>
<dbReference type="InterPro" id="IPR029063">
    <property type="entry name" value="SAM-dependent_MTases_sf"/>
</dbReference>
<dbReference type="InterPro" id="IPR010233">
    <property type="entry name" value="UbiG_MeTrfase"/>
</dbReference>
<dbReference type="NCBIfam" id="TIGR01983">
    <property type="entry name" value="UbiG"/>
    <property type="match status" value="1"/>
</dbReference>
<dbReference type="PANTHER" id="PTHR43464">
    <property type="entry name" value="METHYLTRANSFERASE"/>
    <property type="match status" value="1"/>
</dbReference>
<dbReference type="PANTHER" id="PTHR43464:SF19">
    <property type="entry name" value="UBIQUINONE BIOSYNTHESIS O-METHYLTRANSFERASE, MITOCHONDRIAL"/>
    <property type="match status" value="1"/>
</dbReference>
<dbReference type="Pfam" id="PF13489">
    <property type="entry name" value="Methyltransf_23"/>
    <property type="match status" value="1"/>
</dbReference>
<dbReference type="SUPFAM" id="SSF53335">
    <property type="entry name" value="S-adenosyl-L-methionine-dependent methyltransferases"/>
    <property type="match status" value="1"/>
</dbReference>
<protein>
    <recommendedName>
        <fullName evidence="1">Ubiquinone biosynthesis O-methyltransferase</fullName>
    </recommendedName>
    <alternativeName>
        <fullName evidence="1">2-polyprenyl-6-hydroxyphenol methylase</fullName>
        <ecNumber evidence="1">2.1.1.222</ecNumber>
    </alternativeName>
    <alternativeName>
        <fullName evidence="1">3-demethylubiquinone 3-O-methyltransferase</fullName>
        <ecNumber evidence="1">2.1.1.64</ecNumber>
    </alternativeName>
</protein>
<gene>
    <name evidence="1" type="primary">ubiG</name>
    <name type="ordered locus">VC_1257</name>
</gene>
<organism>
    <name type="scientific">Vibrio cholerae serotype O1 (strain ATCC 39315 / El Tor Inaba N16961)</name>
    <dbReference type="NCBI Taxonomy" id="243277"/>
    <lineage>
        <taxon>Bacteria</taxon>
        <taxon>Pseudomonadati</taxon>
        <taxon>Pseudomonadota</taxon>
        <taxon>Gammaproteobacteria</taxon>
        <taxon>Vibrionales</taxon>
        <taxon>Vibrionaceae</taxon>
        <taxon>Vibrio</taxon>
    </lineage>
</organism>
<feature type="chain" id="PRO_0000193405" description="Ubiquinone biosynthesis O-methyltransferase">
    <location>
        <begin position="1"/>
        <end position="245"/>
    </location>
</feature>
<feature type="binding site" evidence="1">
    <location>
        <position position="49"/>
    </location>
    <ligand>
        <name>S-adenosyl-L-methionine</name>
        <dbReference type="ChEBI" id="CHEBI:59789"/>
    </ligand>
</feature>
<feature type="binding site" evidence="1">
    <location>
        <position position="69"/>
    </location>
    <ligand>
        <name>S-adenosyl-L-methionine</name>
        <dbReference type="ChEBI" id="CHEBI:59789"/>
    </ligand>
</feature>
<feature type="binding site" evidence="1">
    <location>
        <position position="90"/>
    </location>
    <ligand>
        <name>S-adenosyl-L-methionine</name>
        <dbReference type="ChEBI" id="CHEBI:59789"/>
    </ligand>
</feature>
<feature type="binding site" evidence="1">
    <location>
        <position position="134"/>
    </location>
    <ligand>
        <name>S-adenosyl-L-methionine</name>
        <dbReference type="ChEBI" id="CHEBI:59789"/>
    </ligand>
</feature>
<proteinExistence type="inferred from homology"/>
<name>UBIG_VIBCH</name>